<proteinExistence type="evidence at transcript level"/>
<accession>Q49LS1</accession>
<comment type="subcellular location">
    <subcellularLocation>
        <location evidence="1">Cell membrane</location>
        <topology evidence="2">Multi-pass membrane protein</topology>
    </subcellularLocation>
</comment>
<comment type="similarity">
    <text evidence="5">Belongs to the XK family.</text>
</comment>
<keyword id="KW-1003">Cell membrane</keyword>
<keyword id="KW-0472">Membrane</keyword>
<keyword id="KW-1185">Reference proteome</keyword>
<keyword id="KW-0812">Transmembrane</keyword>
<keyword id="KW-1133">Transmembrane helix</keyword>
<feature type="chain" id="PRO_0000190790" description="XK-related protein 7">
    <location>
        <begin position="1"/>
        <end position="579"/>
    </location>
</feature>
<feature type="transmembrane region" description="Helical" evidence="2">
    <location>
        <begin position="59"/>
        <end position="79"/>
    </location>
</feature>
<feature type="transmembrane region" description="Helical" evidence="2">
    <location>
        <begin position="89"/>
        <end position="109"/>
    </location>
</feature>
<feature type="transmembrane region" description="Helical" evidence="2">
    <location>
        <begin position="260"/>
        <end position="280"/>
    </location>
</feature>
<feature type="transmembrane region" description="Helical" evidence="2">
    <location>
        <begin position="314"/>
        <end position="334"/>
    </location>
</feature>
<feature type="transmembrane region" description="Helical" evidence="2">
    <location>
        <begin position="355"/>
        <end position="375"/>
    </location>
</feature>
<feature type="transmembrane region" description="Helical" evidence="2">
    <location>
        <begin position="384"/>
        <end position="404"/>
    </location>
</feature>
<feature type="transmembrane region" description="Helical" evidence="2">
    <location>
        <begin position="415"/>
        <end position="435"/>
    </location>
</feature>
<feature type="region of interest" description="Disordered" evidence="3">
    <location>
        <begin position="1"/>
        <end position="40"/>
    </location>
</feature>
<feature type="region of interest" description="Disordered" evidence="3">
    <location>
        <begin position="146"/>
        <end position="165"/>
    </location>
</feature>
<feature type="region of interest" description="Disordered" evidence="3">
    <location>
        <begin position="466"/>
        <end position="510"/>
    </location>
</feature>
<feature type="compositionally biased region" description="Low complexity" evidence="3">
    <location>
        <begin position="1"/>
        <end position="18"/>
    </location>
</feature>
<feature type="compositionally biased region" description="Gly residues" evidence="3">
    <location>
        <begin position="19"/>
        <end position="31"/>
    </location>
</feature>
<gene>
    <name type="primary">XKR7</name>
    <name evidence="4" type="synonym">XRG7</name>
</gene>
<dbReference type="EMBL" id="AY702910">
    <property type="protein sequence ID" value="AAV83783.1"/>
    <property type="molecule type" value="mRNA"/>
</dbReference>
<dbReference type="RefSeq" id="NP_001028206.1">
    <property type="nucleotide sequence ID" value="NM_001033034.1"/>
</dbReference>
<dbReference type="SMR" id="Q49LS1"/>
<dbReference type="GeneID" id="458161"/>
<dbReference type="KEGG" id="ptr:458161"/>
<dbReference type="CTD" id="343702"/>
<dbReference type="InParanoid" id="Q49LS1"/>
<dbReference type="OrthoDB" id="14585at9604"/>
<dbReference type="Proteomes" id="UP000002277">
    <property type="component" value="Unplaced"/>
</dbReference>
<dbReference type="GO" id="GO:0005886">
    <property type="term" value="C:plasma membrane"/>
    <property type="evidence" value="ECO:0000250"/>
    <property type="project" value="UniProtKB"/>
</dbReference>
<dbReference type="GO" id="GO:1902742">
    <property type="term" value="P:apoptotic process involved in development"/>
    <property type="evidence" value="ECO:0000318"/>
    <property type="project" value="GO_Central"/>
</dbReference>
<dbReference type="GO" id="GO:0043652">
    <property type="term" value="P:engulfment of apoptotic cell"/>
    <property type="evidence" value="ECO:0000318"/>
    <property type="project" value="GO_Central"/>
</dbReference>
<dbReference type="GO" id="GO:0070782">
    <property type="term" value="P:phosphatidylserine exposure on apoptotic cell surface"/>
    <property type="evidence" value="ECO:0000318"/>
    <property type="project" value="GO_Central"/>
</dbReference>
<dbReference type="InterPro" id="IPR018629">
    <property type="entry name" value="XK-rel"/>
</dbReference>
<dbReference type="InterPro" id="IPR050895">
    <property type="entry name" value="XK-related_scramblase"/>
</dbReference>
<dbReference type="PANTHER" id="PTHR16024">
    <property type="entry name" value="XK-RELATED PROTEIN"/>
    <property type="match status" value="1"/>
</dbReference>
<dbReference type="PANTHER" id="PTHR16024:SF7">
    <property type="entry name" value="XK-RELATED PROTEIN 7"/>
    <property type="match status" value="1"/>
</dbReference>
<dbReference type="Pfam" id="PF09815">
    <property type="entry name" value="XK-related"/>
    <property type="match status" value="1"/>
</dbReference>
<evidence type="ECO:0000250" key="1">
    <source>
        <dbReference type="UniProtKB" id="Q5GH64"/>
    </source>
</evidence>
<evidence type="ECO:0000255" key="2"/>
<evidence type="ECO:0000256" key="3">
    <source>
        <dbReference type="SAM" id="MobiDB-lite"/>
    </source>
</evidence>
<evidence type="ECO:0000303" key="4">
    <source ref="1"/>
</evidence>
<evidence type="ECO:0000305" key="5"/>
<name>XKR7_PANTR</name>
<sequence length="579" mass="63593">MAAKSDGAAASAGPDPEGAAGGARGSAGGRGEAAAAAGPPGVVGAGGPGPRYELRDCCWVLCALLVFFSDGATDLWLAASYYLQNQHTYFSLTLLFVLLPSLVVQLLSFRWFVYDYSEPAGSPGPAVSTKDSVAGGAAISTKDSAGAFRTKEGSPEPGPQPAPSSASAYRRRCCRLCIWLLQTLVHLLQLGQVWRYLRALYLGLQSRWRGERLRRHFYWQMLFESADVSMLRLLETFLRSAPQLVLQLSLLVHRGGAPDLLPALSTSASLVSLAWTLASYQKVLRDSRDDKRPLSYKGAVAQVLWHLFSIAARGLAFALFASVYKLYFGICIVGHWSVMTFWVIQGETDFCMSKGEEIIYNMVVGIIYIFCWFNVKEGRSRRRMTLYHCIVLLENAALTGFWYSSRNFSTDFYSLIMVCVVASSFALGIFFMCVYYCLLHPNGPMLGPQAPGCIFRKASEPCGPPADAITSPPRSLPRTTGAERDGASAGERAGTPTPPVFQVRPGLPPTPVARTLRTEGPVIRIDLPRKKYPAWDAHFIDRRLRKTILALEYSSPATPRLQYRSVGTSQELLEYETTV</sequence>
<reference key="1">
    <citation type="submission" date="2004-07" db="EMBL/GenBank/DDBJ databases">
        <title>A superfamily of XK-related genes (XRG) widely expressed in vertebrates and invertebrates.</title>
        <authorList>
            <person name="Huang C.-H."/>
            <person name="Chen Y."/>
        </authorList>
    </citation>
    <scope>NUCLEOTIDE SEQUENCE [MRNA]</scope>
</reference>
<organism>
    <name type="scientific">Pan troglodytes</name>
    <name type="common">Chimpanzee</name>
    <dbReference type="NCBI Taxonomy" id="9598"/>
    <lineage>
        <taxon>Eukaryota</taxon>
        <taxon>Metazoa</taxon>
        <taxon>Chordata</taxon>
        <taxon>Craniata</taxon>
        <taxon>Vertebrata</taxon>
        <taxon>Euteleostomi</taxon>
        <taxon>Mammalia</taxon>
        <taxon>Eutheria</taxon>
        <taxon>Euarchontoglires</taxon>
        <taxon>Primates</taxon>
        <taxon>Haplorrhini</taxon>
        <taxon>Catarrhini</taxon>
        <taxon>Hominidae</taxon>
        <taxon>Pan</taxon>
    </lineage>
</organism>
<protein>
    <recommendedName>
        <fullName evidence="5">XK-related protein 7</fullName>
    </recommendedName>
</protein>